<gene>
    <name evidence="1" type="primary">dusB</name>
    <name type="ordered locus">XCC0763</name>
</gene>
<accession>Q8PCH1</accession>
<name>DUSB_XANCP</name>
<feature type="chain" id="PRO_0000162105" description="tRNA-dihydrouridine synthase B">
    <location>
        <begin position="1"/>
        <end position="332"/>
    </location>
</feature>
<feature type="active site" description="Proton donor" evidence="1">
    <location>
        <position position="100"/>
    </location>
</feature>
<feature type="binding site" evidence="1">
    <location>
        <begin position="16"/>
        <end position="18"/>
    </location>
    <ligand>
        <name>FMN</name>
        <dbReference type="ChEBI" id="CHEBI:58210"/>
    </ligand>
</feature>
<feature type="binding site" evidence="1">
    <location>
        <position position="70"/>
    </location>
    <ligand>
        <name>FMN</name>
        <dbReference type="ChEBI" id="CHEBI:58210"/>
    </ligand>
</feature>
<feature type="binding site" evidence="1">
    <location>
        <position position="139"/>
    </location>
    <ligand>
        <name>FMN</name>
        <dbReference type="ChEBI" id="CHEBI:58210"/>
    </ligand>
</feature>
<feature type="binding site" evidence="1">
    <location>
        <begin position="200"/>
        <end position="202"/>
    </location>
    <ligand>
        <name>FMN</name>
        <dbReference type="ChEBI" id="CHEBI:58210"/>
    </ligand>
</feature>
<feature type="binding site" evidence="1">
    <location>
        <begin position="224"/>
        <end position="225"/>
    </location>
    <ligand>
        <name>FMN</name>
        <dbReference type="ChEBI" id="CHEBI:58210"/>
    </ligand>
</feature>
<keyword id="KW-0285">Flavoprotein</keyword>
<keyword id="KW-0288">FMN</keyword>
<keyword id="KW-0521">NADP</keyword>
<keyword id="KW-0560">Oxidoreductase</keyword>
<keyword id="KW-1185">Reference proteome</keyword>
<keyword id="KW-0694">RNA-binding</keyword>
<keyword id="KW-0819">tRNA processing</keyword>
<keyword id="KW-0820">tRNA-binding</keyword>
<organism>
    <name type="scientific">Xanthomonas campestris pv. campestris (strain ATCC 33913 / DSM 3586 / NCPPB 528 / LMG 568 / P 25)</name>
    <dbReference type="NCBI Taxonomy" id="190485"/>
    <lineage>
        <taxon>Bacteria</taxon>
        <taxon>Pseudomonadati</taxon>
        <taxon>Pseudomonadota</taxon>
        <taxon>Gammaproteobacteria</taxon>
        <taxon>Lysobacterales</taxon>
        <taxon>Lysobacteraceae</taxon>
        <taxon>Xanthomonas</taxon>
    </lineage>
</organism>
<reference key="1">
    <citation type="journal article" date="2002" name="Nature">
        <title>Comparison of the genomes of two Xanthomonas pathogens with differing host specificities.</title>
        <authorList>
            <person name="da Silva A.C.R."/>
            <person name="Ferro J.A."/>
            <person name="Reinach F.C."/>
            <person name="Farah C.S."/>
            <person name="Furlan L.R."/>
            <person name="Quaggio R.B."/>
            <person name="Monteiro-Vitorello C.B."/>
            <person name="Van Sluys M.A."/>
            <person name="Almeida N.F. Jr."/>
            <person name="Alves L.M.C."/>
            <person name="do Amaral A.M."/>
            <person name="Bertolini M.C."/>
            <person name="Camargo L.E.A."/>
            <person name="Camarotte G."/>
            <person name="Cannavan F."/>
            <person name="Cardozo J."/>
            <person name="Chambergo F."/>
            <person name="Ciapina L.P."/>
            <person name="Cicarelli R.M.B."/>
            <person name="Coutinho L.L."/>
            <person name="Cursino-Santos J.R."/>
            <person name="El-Dorry H."/>
            <person name="Faria J.B."/>
            <person name="Ferreira A.J.S."/>
            <person name="Ferreira R.C.C."/>
            <person name="Ferro M.I.T."/>
            <person name="Formighieri E.F."/>
            <person name="Franco M.C."/>
            <person name="Greggio C.C."/>
            <person name="Gruber A."/>
            <person name="Katsuyama A.M."/>
            <person name="Kishi L.T."/>
            <person name="Leite R.P."/>
            <person name="Lemos E.G.M."/>
            <person name="Lemos M.V.F."/>
            <person name="Locali E.C."/>
            <person name="Machado M.A."/>
            <person name="Madeira A.M.B.N."/>
            <person name="Martinez-Rossi N.M."/>
            <person name="Martins E.C."/>
            <person name="Meidanis J."/>
            <person name="Menck C.F.M."/>
            <person name="Miyaki C.Y."/>
            <person name="Moon D.H."/>
            <person name="Moreira L.M."/>
            <person name="Novo M.T.M."/>
            <person name="Okura V.K."/>
            <person name="Oliveira M.C."/>
            <person name="Oliveira V.R."/>
            <person name="Pereira H.A."/>
            <person name="Rossi A."/>
            <person name="Sena J.A.D."/>
            <person name="Silva C."/>
            <person name="de Souza R.F."/>
            <person name="Spinola L.A.F."/>
            <person name="Takita M.A."/>
            <person name="Tamura R.E."/>
            <person name="Teixeira E.C."/>
            <person name="Tezza R.I.D."/>
            <person name="Trindade dos Santos M."/>
            <person name="Truffi D."/>
            <person name="Tsai S.M."/>
            <person name="White F.F."/>
            <person name="Setubal J.C."/>
            <person name="Kitajima J.P."/>
        </authorList>
    </citation>
    <scope>NUCLEOTIDE SEQUENCE [LARGE SCALE GENOMIC DNA]</scope>
    <source>
        <strain>ATCC 33913 / DSM 3586 / NCPPB 528 / LMG 568 / P 25</strain>
    </source>
</reference>
<protein>
    <recommendedName>
        <fullName evidence="1">tRNA-dihydrouridine synthase B</fullName>
        <ecNumber evidence="1">1.3.1.-</ecNumber>
    </recommendedName>
</protein>
<sequence>MQIGPYTIAPKVILAPMAGVTDKPFRLLCKRLGAGLAVSEMTISDPRFWGTRKSLHRMDHAGEPDPISVQIAGTEPQQLAEAARYNVDHGAQLIDINMGCPAKKVCNAWAGSALMRDEDLVARILSAVVRAVDVPVTLKIRTGWDCDHRNGPTIARIAQDCGIAALAVHGRTRDQHYTGTAEYATIAQIKAALQIPVIANGDIDSPQKAAQVLRDTGVDAVMIGRAAQGRPWIFGEVAHYLATGALLPPPSLAFVRDTLLGHLEALHAFYGQPQGVRIARKHLGWYAKDHPQSADFRAVVNRAETPEAQLALTRDYFDALIAGVPPPLHAAA</sequence>
<proteinExistence type="inferred from homology"/>
<evidence type="ECO:0000255" key="1">
    <source>
        <dbReference type="HAMAP-Rule" id="MF_02042"/>
    </source>
</evidence>
<comment type="function">
    <text evidence="1">Catalyzes the synthesis of 5,6-dihydrouridine (D), a modified base found in the D-loop of most tRNAs, via the reduction of the C5-C6 double bond in target uridines.</text>
</comment>
<comment type="catalytic activity">
    <reaction evidence="1">
        <text>a 5,6-dihydrouridine in tRNA + NAD(+) = a uridine in tRNA + NADH + H(+)</text>
        <dbReference type="Rhea" id="RHEA:54452"/>
        <dbReference type="Rhea" id="RHEA-COMP:13339"/>
        <dbReference type="Rhea" id="RHEA-COMP:13887"/>
        <dbReference type="ChEBI" id="CHEBI:15378"/>
        <dbReference type="ChEBI" id="CHEBI:57540"/>
        <dbReference type="ChEBI" id="CHEBI:57945"/>
        <dbReference type="ChEBI" id="CHEBI:65315"/>
        <dbReference type="ChEBI" id="CHEBI:74443"/>
    </reaction>
</comment>
<comment type="catalytic activity">
    <reaction evidence="1">
        <text>a 5,6-dihydrouridine in tRNA + NADP(+) = a uridine in tRNA + NADPH + H(+)</text>
        <dbReference type="Rhea" id="RHEA:23624"/>
        <dbReference type="Rhea" id="RHEA-COMP:13339"/>
        <dbReference type="Rhea" id="RHEA-COMP:13887"/>
        <dbReference type="ChEBI" id="CHEBI:15378"/>
        <dbReference type="ChEBI" id="CHEBI:57783"/>
        <dbReference type="ChEBI" id="CHEBI:58349"/>
        <dbReference type="ChEBI" id="CHEBI:65315"/>
        <dbReference type="ChEBI" id="CHEBI:74443"/>
    </reaction>
</comment>
<comment type="cofactor">
    <cofactor evidence="1">
        <name>FMN</name>
        <dbReference type="ChEBI" id="CHEBI:58210"/>
    </cofactor>
</comment>
<comment type="similarity">
    <text evidence="1">Belongs to the Dus family. DusB subfamily.</text>
</comment>
<dbReference type="EC" id="1.3.1.-" evidence="1"/>
<dbReference type="EMBL" id="AE008922">
    <property type="protein sequence ID" value="AAM40078.1"/>
    <property type="molecule type" value="Genomic_DNA"/>
</dbReference>
<dbReference type="RefSeq" id="NP_636154.1">
    <property type="nucleotide sequence ID" value="NC_003902.1"/>
</dbReference>
<dbReference type="RefSeq" id="WP_011035999.1">
    <property type="nucleotide sequence ID" value="NC_003902.1"/>
</dbReference>
<dbReference type="SMR" id="Q8PCH1"/>
<dbReference type="STRING" id="190485.XCC0763"/>
<dbReference type="EnsemblBacteria" id="AAM40078">
    <property type="protein sequence ID" value="AAM40078"/>
    <property type="gene ID" value="XCC0763"/>
</dbReference>
<dbReference type="GeneID" id="58014663"/>
<dbReference type="KEGG" id="xcc:XCC0763"/>
<dbReference type="PATRIC" id="fig|190485.4.peg.832"/>
<dbReference type="eggNOG" id="COG0042">
    <property type="taxonomic scope" value="Bacteria"/>
</dbReference>
<dbReference type="HOGENOM" id="CLU_013299_0_1_6"/>
<dbReference type="OrthoDB" id="9764501at2"/>
<dbReference type="Proteomes" id="UP000001010">
    <property type="component" value="Chromosome"/>
</dbReference>
<dbReference type="GO" id="GO:0050660">
    <property type="term" value="F:flavin adenine dinucleotide binding"/>
    <property type="evidence" value="ECO:0007669"/>
    <property type="project" value="InterPro"/>
</dbReference>
<dbReference type="GO" id="GO:0010181">
    <property type="term" value="F:FMN binding"/>
    <property type="evidence" value="ECO:0007669"/>
    <property type="project" value="UniProtKB-UniRule"/>
</dbReference>
<dbReference type="GO" id="GO:0000049">
    <property type="term" value="F:tRNA binding"/>
    <property type="evidence" value="ECO:0007669"/>
    <property type="project" value="UniProtKB-UniRule"/>
</dbReference>
<dbReference type="GO" id="GO:0017150">
    <property type="term" value="F:tRNA dihydrouridine synthase activity"/>
    <property type="evidence" value="ECO:0007669"/>
    <property type="project" value="UniProtKB-UniRule"/>
</dbReference>
<dbReference type="CDD" id="cd02801">
    <property type="entry name" value="DUS_like_FMN"/>
    <property type="match status" value="1"/>
</dbReference>
<dbReference type="Gene3D" id="3.20.20.70">
    <property type="entry name" value="Aldolase class I"/>
    <property type="match status" value="1"/>
</dbReference>
<dbReference type="Gene3D" id="1.10.1200.80">
    <property type="entry name" value="Putative flavin oxidoreducatase, domain 2"/>
    <property type="match status" value="1"/>
</dbReference>
<dbReference type="HAMAP" id="MF_02042">
    <property type="entry name" value="DusB_subfam"/>
    <property type="match status" value="1"/>
</dbReference>
<dbReference type="InterPro" id="IPR013785">
    <property type="entry name" value="Aldolase_TIM"/>
</dbReference>
<dbReference type="InterPro" id="IPR035587">
    <property type="entry name" value="DUS-like_FMN-bd"/>
</dbReference>
<dbReference type="InterPro" id="IPR001269">
    <property type="entry name" value="DUS_fam"/>
</dbReference>
<dbReference type="InterPro" id="IPR032887">
    <property type="entry name" value="DusB"/>
</dbReference>
<dbReference type="InterPro" id="IPR004652">
    <property type="entry name" value="DusB-like"/>
</dbReference>
<dbReference type="InterPro" id="IPR024036">
    <property type="entry name" value="tRNA-dHydroUridine_Synthase_C"/>
</dbReference>
<dbReference type="InterPro" id="IPR018517">
    <property type="entry name" value="tRNA_hU_synthase_CS"/>
</dbReference>
<dbReference type="NCBIfam" id="TIGR00737">
    <property type="entry name" value="nifR3_yhdG"/>
    <property type="match status" value="1"/>
</dbReference>
<dbReference type="PANTHER" id="PTHR45846">
    <property type="entry name" value="TRNA-DIHYDROURIDINE(47) SYNTHASE [NAD(P)(+)]-LIKE"/>
    <property type="match status" value="1"/>
</dbReference>
<dbReference type="PANTHER" id="PTHR45846:SF1">
    <property type="entry name" value="TRNA-DIHYDROURIDINE(47) SYNTHASE [NAD(P)(+)]-LIKE"/>
    <property type="match status" value="1"/>
</dbReference>
<dbReference type="Pfam" id="PF01207">
    <property type="entry name" value="Dus"/>
    <property type="match status" value="1"/>
</dbReference>
<dbReference type="PIRSF" id="PIRSF006621">
    <property type="entry name" value="Dus"/>
    <property type="match status" value="1"/>
</dbReference>
<dbReference type="SUPFAM" id="SSF51395">
    <property type="entry name" value="FMN-linked oxidoreductases"/>
    <property type="match status" value="1"/>
</dbReference>
<dbReference type="PROSITE" id="PS01136">
    <property type="entry name" value="UPF0034"/>
    <property type="match status" value="1"/>
</dbReference>